<organism>
    <name type="scientific">Streptococcus pneumoniae (strain ATCC 700669 / Spain 23F-1)</name>
    <dbReference type="NCBI Taxonomy" id="561276"/>
    <lineage>
        <taxon>Bacteria</taxon>
        <taxon>Bacillati</taxon>
        <taxon>Bacillota</taxon>
        <taxon>Bacilli</taxon>
        <taxon>Lactobacillales</taxon>
        <taxon>Streptococcaceae</taxon>
        <taxon>Streptococcus</taxon>
    </lineage>
</organism>
<name>PDXS_STRPJ</name>
<gene>
    <name evidence="1" type="primary">pdxS</name>
    <name type="ordered locus">SPN23F14320</name>
</gene>
<sequence>MTENRYELNKNLAQMLKGGVIMDVQNPEQARIAEAAGAAAVMALERIPADIRAAGGVSRMSDPKMIKEIQEAVSIPVMAKVRIGHFVEAQILEAIEIDYIDESEVLSPADDRFHVDKKEFQVPFVCGAKDLGEALRRIAEGASMIRTKGEPGTGDIVQAVRHMRMMNQEIRRIQNLREDELYVAAKDLQVPVELVQYVHEHGKLPVVNFAAGGVATPADAALMMQLGAEGVFVGSGIFKSGDPVKRASAIVKAVTNFRNPQILAQISEDLGEAMVGINENEIQILMAERGK</sequence>
<keyword id="KW-0456">Lyase</keyword>
<keyword id="KW-0663">Pyridoxal phosphate</keyword>
<keyword id="KW-0704">Schiff base</keyword>
<feature type="chain" id="PRO_1000188243" description="Pyridoxal 5'-phosphate synthase subunit PdxS">
    <location>
        <begin position="1"/>
        <end position="291"/>
    </location>
</feature>
<feature type="active site" description="Schiff-base intermediate with D-ribose 5-phosphate" evidence="1">
    <location>
        <position position="80"/>
    </location>
</feature>
<feature type="binding site" evidence="1">
    <location>
        <position position="23"/>
    </location>
    <ligand>
        <name>D-ribose 5-phosphate</name>
        <dbReference type="ChEBI" id="CHEBI:78346"/>
    </ligand>
</feature>
<feature type="binding site" evidence="1">
    <location>
        <position position="152"/>
    </location>
    <ligand>
        <name>D-ribose 5-phosphate</name>
        <dbReference type="ChEBI" id="CHEBI:78346"/>
    </ligand>
</feature>
<feature type="binding site" evidence="1">
    <location>
        <position position="164"/>
    </location>
    <ligand>
        <name>D-glyceraldehyde 3-phosphate</name>
        <dbReference type="ChEBI" id="CHEBI:59776"/>
    </ligand>
</feature>
<feature type="binding site" evidence="1">
    <location>
        <position position="213"/>
    </location>
    <ligand>
        <name>D-ribose 5-phosphate</name>
        <dbReference type="ChEBI" id="CHEBI:78346"/>
    </ligand>
</feature>
<feature type="binding site" evidence="1">
    <location>
        <begin position="234"/>
        <end position="235"/>
    </location>
    <ligand>
        <name>D-ribose 5-phosphate</name>
        <dbReference type="ChEBI" id="CHEBI:78346"/>
    </ligand>
</feature>
<dbReference type="EC" id="4.3.3.6" evidence="1"/>
<dbReference type="EMBL" id="FM211187">
    <property type="protein sequence ID" value="CAR69223.1"/>
    <property type="molecule type" value="Genomic_DNA"/>
</dbReference>
<dbReference type="RefSeq" id="WP_000138517.1">
    <property type="nucleotide sequence ID" value="NC_011900.1"/>
</dbReference>
<dbReference type="SMR" id="B8ZL14"/>
<dbReference type="GeneID" id="45653282"/>
<dbReference type="KEGG" id="sne:SPN23F14320"/>
<dbReference type="HOGENOM" id="CLU_055352_1_0_9"/>
<dbReference type="UniPathway" id="UPA00245"/>
<dbReference type="GO" id="GO:0036381">
    <property type="term" value="F:pyridoxal 5'-phosphate synthase (glutamine hydrolysing) activity"/>
    <property type="evidence" value="ECO:0007669"/>
    <property type="project" value="UniProtKB-UniRule"/>
</dbReference>
<dbReference type="GO" id="GO:0006520">
    <property type="term" value="P:amino acid metabolic process"/>
    <property type="evidence" value="ECO:0007669"/>
    <property type="project" value="TreeGrafter"/>
</dbReference>
<dbReference type="GO" id="GO:0042823">
    <property type="term" value="P:pyridoxal phosphate biosynthetic process"/>
    <property type="evidence" value="ECO:0007669"/>
    <property type="project" value="UniProtKB-UniRule"/>
</dbReference>
<dbReference type="GO" id="GO:0008615">
    <property type="term" value="P:pyridoxine biosynthetic process"/>
    <property type="evidence" value="ECO:0007669"/>
    <property type="project" value="TreeGrafter"/>
</dbReference>
<dbReference type="CDD" id="cd04727">
    <property type="entry name" value="pdxS"/>
    <property type="match status" value="1"/>
</dbReference>
<dbReference type="FunFam" id="3.20.20.70:FF:000001">
    <property type="entry name" value="Pyridoxine biosynthesis protein PDX1"/>
    <property type="match status" value="1"/>
</dbReference>
<dbReference type="Gene3D" id="3.20.20.70">
    <property type="entry name" value="Aldolase class I"/>
    <property type="match status" value="1"/>
</dbReference>
<dbReference type="HAMAP" id="MF_01824">
    <property type="entry name" value="PdxS"/>
    <property type="match status" value="1"/>
</dbReference>
<dbReference type="InterPro" id="IPR013785">
    <property type="entry name" value="Aldolase_TIM"/>
</dbReference>
<dbReference type="InterPro" id="IPR001852">
    <property type="entry name" value="PdxS/SNZ"/>
</dbReference>
<dbReference type="InterPro" id="IPR033755">
    <property type="entry name" value="PdxS/SNZ_N"/>
</dbReference>
<dbReference type="InterPro" id="IPR011060">
    <property type="entry name" value="RibuloseP-bd_barrel"/>
</dbReference>
<dbReference type="NCBIfam" id="NF003215">
    <property type="entry name" value="PRK04180.1"/>
    <property type="match status" value="1"/>
</dbReference>
<dbReference type="NCBIfam" id="TIGR00343">
    <property type="entry name" value="pyridoxal 5'-phosphate synthase lyase subunit PdxS"/>
    <property type="match status" value="1"/>
</dbReference>
<dbReference type="PANTHER" id="PTHR31829">
    <property type="entry name" value="PYRIDOXAL 5'-PHOSPHATE SYNTHASE SUBUNIT SNZ1-RELATED"/>
    <property type="match status" value="1"/>
</dbReference>
<dbReference type="PANTHER" id="PTHR31829:SF0">
    <property type="entry name" value="PYRIDOXAL 5'-PHOSPHATE SYNTHASE SUBUNIT SNZ1-RELATED"/>
    <property type="match status" value="1"/>
</dbReference>
<dbReference type="Pfam" id="PF01680">
    <property type="entry name" value="SOR_SNZ"/>
    <property type="match status" value="1"/>
</dbReference>
<dbReference type="PIRSF" id="PIRSF029271">
    <property type="entry name" value="Pdx1"/>
    <property type="match status" value="1"/>
</dbReference>
<dbReference type="SUPFAM" id="SSF51366">
    <property type="entry name" value="Ribulose-phoshate binding barrel"/>
    <property type="match status" value="1"/>
</dbReference>
<dbReference type="PROSITE" id="PS01235">
    <property type="entry name" value="PDXS_SNZ_1"/>
    <property type="match status" value="1"/>
</dbReference>
<dbReference type="PROSITE" id="PS51129">
    <property type="entry name" value="PDXS_SNZ_2"/>
    <property type="match status" value="1"/>
</dbReference>
<protein>
    <recommendedName>
        <fullName evidence="1">Pyridoxal 5'-phosphate synthase subunit PdxS</fullName>
        <shortName evidence="1">PLP synthase subunit PdxS</shortName>
        <ecNumber evidence="1">4.3.3.6</ecNumber>
    </recommendedName>
    <alternativeName>
        <fullName evidence="1">Pdx1</fullName>
    </alternativeName>
</protein>
<accession>B8ZL14</accession>
<proteinExistence type="inferred from homology"/>
<comment type="function">
    <text evidence="1">Catalyzes the formation of pyridoxal 5'-phosphate from ribose 5-phosphate (RBP), glyceraldehyde 3-phosphate (G3P) and ammonia. The ammonia is provided by the PdxT subunit. Can also use ribulose 5-phosphate and dihydroxyacetone phosphate as substrates, resulting from enzyme-catalyzed isomerization of RBP and G3P, respectively.</text>
</comment>
<comment type="catalytic activity">
    <reaction evidence="1">
        <text>aldehydo-D-ribose 5-phosphate + D-glyceraldehyde 3-phosphate + L-glutamine = pyridoxal 5'-phosphate + L-glutamate + phosphate + 3 H2O + H(+)</text>
        <dbReference type="Rhea" id="RHEA:31507"/>
        <dbReference type="ChEBI" id="CHEBI:15377"/>
        <dbReference type="ChEBI" id="CHEBI:15378"/>
        <dbReference type="ChEBI" id="CHEBI:29985"/>
        <dbReference type="ChEBI" id="CHEBI:43474"/>
        <dbReference type="ChEBI" id="CHEBI:58273"/>
        <dbReference type="ChEBI" id="CHEBI:58359"/>
        <dbReference type="ChEBI" id="CHEBI:59776"/>
        <dbReference type="ChEBI" id="CHEBI:597326"/>
        <dbReference type="EC" id="4.3.3.6"/>
    </reaction>
</comment>
<comment type="pathway">
    <text evidence="1">Cofactor biosynthesis; pyridoxal 5'-phosphate biosynthesis.</text>
</comment>
<comment type="subunit">
    <text evidence="1">In the presence of PdxT, forms a dodecamer of heterodimers.</text>
</comment>
<comment type="similarity">
    <text evidence="1">Belongs to the PdxS/SNZ family.</text>
</comment>
<evidence type="ECO:0000255" key="1">
    <source>
        <dbReference type="HAMAP-Rule" id="MF_01824"/>
    </source>
</evidence>
<reference key="1">
    <citation type="journal article" date="2009" name="J. Bacteriol.">
        <title>Role of conjugative elements in the evolution of the multidrug-resistant pandemic clone Streptococcus pneumoniae Spain23F ST81.</title>
        <authorList>
            <person name="Croucher N.J."/>
            <person name="Walker D."/>
            <person name="Romero P."/>
            <person name="Lennard N."/>
            <person name="Paterson G.K."/>
            <person name="Bason N.C."/>
            <person name="Mitchell A.M."/>
            <person name="Quail M.A."/>
            <person name="Andrew P.W."/>
            <person name="Parkhill J."/>
            <person name="Bentley S.D."/>
            <person name="Mitchell T.J."/>
        </authorList>
    </citation>
    <scope>NUCLEOTIDE SEQUENCE [LARGE SCALE GENOMIC DNA]</scope>
    <source>
        <strain>ATCC 700669 / Spain 23F-1</strain>
    </source>
</reference>